<sequence length="818" mass="89929">MVSSVVEKTSVAHKETALILWFEEVGTHDVGLVGGKNSSLGEMIQQLTNKGVNVPSGFATTAYAYRYFIQEAGLEQKLRDLFTDLDVNDMANLQERGHLARQLILDTPFPQNLQTAIAEAYGAMCERYGQKMGRTGVDVAVRSSATAEDLPEASFAGQQETYLNVHSLSCVLESCHKCFASLFTDRAISYRHHNGFDHFAVALSVGVQKMVRSDLATSGVMFSIDTETGFKNAALITAAYGLGENVVQGAVNPDEYFVFKPTLKEGFKPILEKRLGSKAIKMVYDVGGSKLTKNVEVAEPEREKYCINDEEILQLARWACIIEDHYSGVRGVYTPMDIEWAKDGQTGELFIVQARPETVQSQKSANVIKTYELKDHSQVLATGRSVGAAIGQGKAQVIRNVSQINQFRPGEVLITNRTDPDWEPIMKQASAIVTNQGGKTCHAAIIAREMGIPAIVGCGDATDTIKTGEDVTICCSEGDEGSVYSGILNYEVHETELSNLPRTKTQILMNVGNPEQAFGFASYPADGVGLARLEFIIANHIKAHPLALMKFDELEDPLAKAEIAELTKLYAGDRPRFFVDKLAHGIAMIAAAFYPKPVVVRMSDFKSNEYANLLGGRQFEPKEENPMIGWRGASRYYDPNYREAYALECQALKRVRDEMGLTNVIPMIPFCRTPDEGRKVIAEMAKHGLKQGKNGLEIYVMCELPSNVILADEFSEVFDGFSIGSNDLTQLTLGLDRDSSLVAHLFDERNLGVKRMVKMAIETAKANGRKIGICGQAPSDYPEFAEFLVELGIDSISLNPDSVLKTVLRIAEVEKALG</sequence>
<reference key="1">
    <citation type="journal article" date="1995" name="DNA Res.">
        <title>Sequence analysis of the genome of the unicellular cyanobacterium Synechocystis sp. strain PCC6803. I. Sequence features in the 1 Mb region from map positions 64% to 92% of the genome.</title>
        <authorList>
            <person name="Kaneko T."/>
            <person name="Tanaka A."/>
            <person name="Sato S."/>
            <person name="Kotani H."/>
            <person name="Sazuka T."/>
            <person name="Miyajima N."/>
            <person name="Sugiura M."/>
            <person name="Tabata S."/>
        </authorList>
    </citation>
    <scope>NUCLEOTIDE SEQUENCE [LARGE SCALE GENOMIC DNA]</scope>
    <source>
        <strain>ATCC 27184 / PCC 6803 / N-1</strain>
    </source>
</reference>
<reference key="2">
    <citation type="journal article" date="1996" name="DNA Res.">
        <title>Sequence analysis of the genome of the unicellular cyanobacterium Synechocystis sp. strain PCC6803. II. Sequence determination of the entire genome and assignment of potential protein-coding regions.</title>
        <authorList>
            <person name="Kaneko T."/>
            <person name="Sato S."/>
            <person name="Kotani H."/>
            <person name="Tanaka A."/>
            <person name="Asamizu E."/>
            <person name="Nakamura Y."/>
            <person name="Miyajima N."/>
            <person name="Hirosawa M."/>
            <person name="Sugiura M."/>
            <person name="Sasamoto S."/>
            <person name="Kimura T."/>
            <person name="Hosouchi T."/>
            <person name="Matsuno A."/>
            <person name="Muraki A."/>
            <person name="Nakazaki N."/>
            <person name="Naruo K."/>
            <person name="Okumura S."/>
            <person name="Shimpo S."/>
            <person name="Takeuchi C."/>
            <person name="Wada T."/>
            <person name="Watanabe A."/>
            <person name="Yamada M."/>
            <person name="Yasuda M."/>
            <person name="Tabata S."/>
        </authorList>
    </citation>
    <scope>NUCLEOTIDE SEQUENCE [LARGE SCALE GENOMIC DNA]</scope>
    <source>
        <strain>ATCC 27184 / PCC 6803 / Kazusa</strain>
    </source>
</reference>
<feature type="chain" id="PRO_0000147039" description="Phosphoenolpyruvate synthase">
    <location>
        <begin position="1"/>
        <end position="818"/>
    </location>
</feature>
<feature type="active site" description="Tele-phosphohistidine intermediate" evidence="1">
    <location>
        <position position="442"/>
    </location>
</feature>
<feature type="active site" description="Proton donor" evidence="1">
    <location>
        <position position="774"/>
    </location>
</feature>
<feature type="binding site" evidence="1">
    <location>
        <position position="532"/>
    </location>
    <ligand>
        <name>substrate</name>
    </ligand>
</feature>
<feature type="binding site" evidence="1">
    <location>
        <position position="601"/>
    </location>
    <ligand>
        <name>substrate</name>
    </ligand>
</feature>
<feature type="binding site" evidence="1">
    <location>
        <position position="703"/>
    </location>
    <ligand>
        <name>Mg(2+)</name>
        <dbReference type="ChEBI" id="CHEBI:18420"/>
    </ligand>
</feature>
<feature type="binding site" evidence="1">
    <location>
        <position position="703"/>
    </location>
    <ligand>
        <name>substrate</name>
    </ligand>
</feature>
<feature type="binding site" evidence="1">
    <location>
        <position position="724"/>
    </location>
    <ligand>
        <name>substrate</name>
    </ligand>
</feature>
<feature type="binding site" evidence="1">
    <location>
        <position position="725"/>
    </location>
    <ligand>
        <name>substrate</name>
    </ligand>
</feature>
<feature type="binding site" evidence="1">
    <location>
        <position position="726"/>
    </location>
    <ligand>
        <name>substrate</name>
    </ligand>
</feature>
<feature type="binding site" evidence="1">
    <location>
        <position position="727"/>
    </location>
    <ligand>
        <name>Mg(2+)</name>
        <dbReference type="ChEBI" id="CHEBI:18420"/>
    </ligand>
</feature>
<feature type="binding site" evidence="1">
    <location>
        <position position="727"/>
    </location>
    <ligand>
        <name>substrate</name>
    </ligand>
</feature>
<comment type="function">
    <text evidence="1">Catalyzes the phosphorylation of pyruvate to phosphoenolpyruvate.</text>
</comment>
<comment type="catalytic activity">
    <reaction>
        <text>pyruvate + ATP + H2O = phosphoenolpyruvate + AMP + phosphate + 2 H(+)</text>
        <dbReference type="Rhea" id="RHEA:11364"/>
        <dbReference type="ChEBI" id="CHEBI:15361"/>
        <dbReference type="ChEBI" id="CHEBI:15377"/>
        <dbReference type="ChEBI" id="CHEBI:15378"/>
        <dbReference type="ChEBI" id="CHEBI:30616"/>
        <dbReference type="ChEBI" id="CHEBI:43474"/>
        <dbReference type="ChEBI" id="CHEBI:58702"/>
        <dbReference type="ChEBI" id="CHEBI:456215"/>
        <dbReference type="EC" id="2.7.9.2"/>
    </reaction>
</comment>
<comment type="cofactor">
    <cofactor evidence="1">
        <name>Mg(2+)</name>
        <dbReference type="ChEBI" id="CHEBI:18420"/>
    </cofactor>
</comment>
<comment type="pathway">
    <text>Carbohydrate biosynthesis; gluconeogenesis.</text>
</comment>
<comment type="domain">
    <text evidence="1">The N-terminal domain contains the ATP/Pi binding site, the central domain the pyrophosphate/phosphate carrier histidine, and the C-terminal domain the pyruvate binding site.</text>
</comment>
<comment type="miscellaneous">
    <text evidence="1">The reaction takes place in three steps, mediated by a phosphocarrier histidine residue located on the surface of the central domain. The two first partial reactions are catalyzed at an active site located on the N-terminal domain, and the third partial reaction is catalyzed at an active site located on the C-terminal domain. For catalytic turnover, the central domain swivels from the concave surface of the N-terminal domain to that of the C-terminal domain (By similarity).</text>
</comment>
<comment type="similarity">
    <text evidence="2">Belongs to the PEP-utilizing enzyme family.</text>
</comment>
<protein>
    <recommendedName>
        <fullName>Phosphoenolpyruvate synthase</fullName>
        <shortName>PEP synthase</shortName>
        <ecNumber>2.7.9.2</ecNumber>
    </recommendedName>
    <alternativeName>
        <fullName>Pyruvate, water dikinase</fullName>
    </alternativeName>
</protein>
<name>PPSA_SYNY3</name>
<keyword id="KW-0067">ATP-binding</keyword>
<keyword id="KW-0418">Kinase</keyword>
<keyword id="KW-0460">Magnesium</keyword>
<keyword id="KW-0479">Metal-binding</keyword>
<keyword id="KW-0547">Nucleotide-binding</keyword>
<keyword id="KW-1185">Reference proteome</keyword>
<keyword id="KW-0808">Transferase</keyword>
<organism>
    <name type="scientific">Synechocystis sp. (strain ATCC 27184 / PCC 6803 / Kazusa)</name>
    <dbReference type="NCBI Taxonomy" id="1111708"/>
    <lineage>
        <taxon>Bacteria</taxon>
        <taxon>Bacillati</taxon>
        <taxon>Cyanobacteriota</taxon>
        <taxon>Cyanophyceae</taxon>
        <taxon>Synechococcales</taxon>
        <taxon>Merismopediaceae</taxon>
        <taxon>Synechocystis</taxon>
    </lineage>
</organism>
<evidence type="ECO:0000250" key="1"/>
<evidence type="ECO:0000305" key="2"/>
<dbReference type="EC" id="2.7.9.2"/>
<dbReference type="EMBL" id="BA000022">
    <property type="protein sequence ID" value="BAA10668.1"/>
    <property type="molecule type" value="Genomic_DNA"/>
</dbReference>
<dbReference type="PIR" id="S76976">
    <property type="entry name" value="S76976"/>
</dbReference>
<dbReference type="SMR" id="Q55905"/>
<dbReference type="FunCoup" id="Q55905">
    <property type="interactions" value="3"/>
</dbReference>
<dbReference type="STRING" id="1148.gene:10500172"/>
<dbReference type="PaxDb" id="1148-1001788"/>
<dbReference type="EnsemblBacteria" id="BAA10668">
    <property type="protein sequence ID" value="BAA10668"/>
    <property type="gene ID" value="BAA10668"/>
</dbReference>
<dbReference type="KEGG" id="syn:slr0301"/>
<dbReference type="eggNOG" id="COG0574">
    <property type="taxonomic scope" value="Bacteria"/>
</dbReference>
<dbReference type="eggNOG" id="COG1080">
    <property type="taxonomic scope" value="Bacteria"/>
</dbReference>
<dbReference type="InParanoid" id="Q55905"/>
<dbReference type="PhylomeDB" id="Q55905"/>
<dbReference type="UniPathway" id="UPA00138"/>
<dbReference type="Proteomes" id="UP000001425">
    <property type="component" value="Chromosome"/>
</dbReference>
<dbReference type="GO" id="GO:0005524">
    <property type="term" value="F:ATP binding"/>
    <property type="evidence" value="ECO:0007669"/>
    <property type="project" value="UniProtKB-KW"/>
</dbReference>
<dbReference type="GO" id="GO:0046872">
    <property type="term" value="F:metal ion binding"/>
    <property type="evidence" value="ECO:0007669"/>
    <property type="project" value="UniProtKB-KW"/>
</dbReference>
<dbReference type="GO" id="GO:0008986">
    <property type="term" value="F:pyruvate, water dikinase activity"/>
    <property type="evidence" value="ECO:0007669"/>
    <property type="project" value="UniProtKB-EC"/>
</dbReference>
<dbReference type="GO" id="GO:0006094">
    <property type="term" value="P:gluconeogenesis"/>
    <property type="evidence" value="ECO:0007669"/>
    <property type="project" value="UniProtKB-UniPathway"/>
</dbReference>
<dbReference type="FunFam" id="3.30.1490.20:FF:000010">
    <property type="entry name" value="Phosphoenolpyruvate synthase"/>
    <property type="match status" value="1"/>
</dbReference>
<dbReference type="FunFam" id="3.30.470.20:FF:000017">
    <property type="entry name" value="Phosphoenolpyruvate synthase"/>
    <property type="match status" value="1"/>
</dbReference>
<dbReference type="FunFam" id="3.50.30.10:FF:000002">
    <property type="entry name" value="Phosphoenolpyruvate synthase"/>
    <property type="match status" value="1"/>
</dbReference>
<dbReference type="Gene3D" id="3.30.1490.20">
    <property type="entry name" value="ATP-grasp fold, A domain"/>
    <property type="match status" value="1"/>
</dbReference>
<dbReference type="Gene3D" id="3.30.470.20">
    <property type="entry name" value="ATP-grasp fold, B domain"/>
    <property type="match status" value="1"/>
</dbReference>
<dbReference type="Gene3D" id="3.20.20.60">
    <property type="entry name" value="Phosphoenolpyruvate-binding domains"/>
    <property type="match status" value="1"/>
</dbReference>
<dbReference type="Gene3D" id="3.50.30.10">
    <property type="entry name" value="Phosphohistidine domain"/>
    <property type="match status" value="1"/>
</dbReference>
<dbReference type="InterPro" id="IPR013815">
    <property type="entry name" value="ATP_grasp_subdomain_1"/>
</dbReference>
<dbReference type="InterPro" id="IPR008279">
    <property type="entry name" value="PEP-util_enz_mobile_dom"/>
</dbReference>
<dbReference type="InterPro" id="IPR006319">
    <property type="entry name" value="PEP_synth"/>
</dbReference>
<dbReference type="InterPro" id="IPR018274">
    <property type="entry name" value="PEP_util_AS"/>
</dbReference>
<dbReference type="InterPro" id="IPR000121">
    <property type="entry name" value="PEP_util_C"/>
</dbReference>
<dbReference type="InterPro" id="IPR023151">
    <property type="entry name" value="PEP_util_CS"/>
</dbReference>
<dbReference type="InterPro" id="IPR036637">
    <property type="entry name" value="Phosphohistidine_dom_sf"/>
</dbReference>
<dbReference type="InterPro" id="IPR002192">
    <property type="entry name" value="PPDK_AMP/ATP-bd"/>
</dbReference>
<dbReference type="InterPro" id="IPR015813">
    <property type="entry name" value="Pyrv/PenolPyrv_kinase-like_dom"/>
</dbReference>
<dbReference type="InterPro" id="IPR040442">
    <property type="entry name" value="Pyrv_kinase-like_dom_sf"/>
</dbReference>
<dbReference type="NCBIfam" id="TIGR01418">
    <property type="entry name" value="PEP_synth"/>
    <property type="match status" value="1"/>
</dbReference>
<dbReference type="NCBIfam" id="NF005057">
    <property type="entry name" value="PRK06464.1"/>
    <property type="match status" value="1"/>
</dbReference>
<dbReference type="PANTHER" id="PTHR43030">
    <property type="entry name" value="PHOSPHOENOLPYRUVATE SYNTHASE"/>
    <property type="match status" value="1"/>
</dbReference>
<dbReference type="PANTHER" id="PTHR43030:SF1">
    <property type="entry name" value="PHOSPHOENOLPYRUVATE SYNTHASE"/>
    <property type="match status" value="1"/>
</dbReference>
<dbReference type="Pfam" id="PF00391">
    <property type="entry name" value="PEP-utilizers"/>
    <property type="match status" value="1"/>
</dbReference>
<dbReference type="Pfam" id="PF02896">
    <property type="entry name" value="PEP-utilizers_C"/>
    <property type="match status" value="1"/>
</dbReference>
<dbReference type="Pfam" id="PF01326">
    <property type="entry name" value="PPDK_N"/>
    <property type="match status" value="1"/>
</dbReference>
<dbReference type="PIRSF" id="PIRSF000854">
    <property type="entry name" value="PEP_synthase"/>
    <property type="match status" value="1"/>
</dbReference>
<dbReference type="SUPFAM" id="SSF56059">
    <property type="entry name" value="Glutathione synthetase ATP-binding domain-like"/>
    <property type="match status" value="1"/>
</dbReference>
<dbReference type="SUPFAM" id="SSF51621">
    <property type="entry name" value="Phosphoenolpyruvate/pyruvate domain"/>
    <property type="match status" value="1"/>
</dbReference>
<dbReference type="SUPFAM" id="SSF52009">
    <property type="entry name" value="Phosphohistidine domain"/>
    <property type="match status" value="1"/>
</dbReference>
<dbReference type="PROSITE" id="PS00742">
    <property type="entry name" value="PEP_ENZYMES_2"/>
    <property type="match status" value="1"/>
</dbReference>
<dbReference type="PROSITE" id="PS00370">
    <property type="entry name" value="PEP_ENZYMES_PHOS_SITE"/>
    <property type="match status" value="1"/>
</dbReference>
<accession>Q55905</accession>
<proteinExistence type="inferred from homology"/>
<gene>
    <name type="primary">ppsA</name>
    <name type="ordered locus">slr0301</name>
</gene>